<sequence>MTRRGLTLLELLLVLGILGVLLGLALPLLSPNRLALDQAARSLATQVTRARLEAIRRNAFVGLQVFTEGAGGYLLFVDQNANRRYDPGEEFGATHFGQGNWARVRLDPEKSALGNMPLLFDPRGIPAKPITATLVLTSGGATRKVVISQQGRARLE</sequence>
<gene>
    <name type="primary">pilA1</name>
    <name type="ordered locus">TT_C0854</name>
</gene>
<protein>
    <recommendedName>
        <fullName evidence="5">Pilin-like protein PilA1</fullName>
    </recommendedName>
</protein>
<evidence type="ECO:0000250" key="1">
    <source>
        <dbReference type="UniProtKB" id="Q72JC0"/>
    </source>
</evidence>
<evidence type="ECO:0000255" key="2"/>
<evidence type="ECO:0000255" key="3">
    <source>
        <dbReference type="PROSITE-ProRule" id="PRU01070"/>
    </source>
</evidence>
<evidence type="ECO:0000269" key="4">
    <source>
    </source>
</evidence>
<evidence type="ECO:0000303" key="5">
    <source>
    </source>
</evidence>
<evidence type="ECO:0000305" key="6"/>
<keyword id="KW-0997">Cell inner membrane</keyword>
<keyword id="KW-1003">Cell membrane</keyword>
<keyword id="KW-0998">Cell outer membrane</keyword>
<keyword id="KW-0472">Membrane</keyword>
<keyword id="KW-0488">Methylation</keyword>
<keyword id="KW-0574">Periplasm</keyword>
<keyword id="KW-0812">Transmembrane</keyword>
<keyword id="KW-1133">Transmembrane helix</keyword>
<dbReference type="EMBL" id="AE017221">
    <property type="protein sequence ID" value="AAS81198.1"/>
    <property type="molecule type" value="Genomic_DNA"/>
</dbReference>
<dbReference type="RefSeq" id="WP_011173283.1">
    <property type="nucleotide sequence ID" value="NC_005835.1"/>
</dbReference>
<dbReference type="SMR" id="Q72JC4"/>
<dbReference type="KEGG" id="tth:TT_C0854"/>
<dbReference type="eggNOG" id="COG4970">
    <property type="taxonomic scope" value="Bacteria"/>
</dbReference>
<dbReference type="HOGENOM" id="CLU_137830_0_0_0"/>
<dbReference type="OrthoDB" id="26110at2"/>
<dbReference type="Proteomes" id="UP000000592">
    <property type="component" value="Chromosome"/>
</dbReference>
<dbReference type="GO" id="GO:0009279">
    <property type="term" value="C:cell outer membrane"/>
    <property type="evidence" value="ECO:0007669"/>
    <property type="project" value="UniProtKB-SubCell"/>
</dbReference>
<dbReference type="GO" id="GO:0042597">
    <property type="term" value="C:periplasmic space"/>
    <property type="evidence" value="ECO:0007669"/>
    <property type="project" value="UniProtKB-SubCell"/>
</dbReference>
<dbReference type="GO" id="GO:0005886">
    <property type="term" value="C:plasma membrane"/>
    <property type="evidence" value="ECO:0007669"/>
    <property type="project" value="UniProtKB-SubCell"/>
</dbReference>
<dbReference type="GO" id="GO:0015627">
    <property type="term" value="C:type II protein secretion system complex"/>
    <property type="evidence" value="ECO:0007669"/>
    <property type="project" value="InterPro"/>
</dbReference>
<dbReference type="GO" id="GO:0015628">
    <property type="term" value="P:protein secretion by the type II secretion system"/>
    <property type="evidence" value="ECO:0007669"/>
    <property type="project" value="InterPro"/>
</dbReference>
<dbReference type="Gene3D" id="3.55.40.10">
    <property type="entry name" value="minor pseudopilin epsh domain"/>
    <property type="match status" value="1"/>
</dbReference>
<dbReference type="InterPro" id="IPR012902">
    <property type="entry name" value="N_methyl_site"/>
</dbReference>
<dbReference type="InterPro" id="IPR045584">
    <property type="entry name" value="Pilin-like"/>
</dbReference>
<dbReference type="InterPro" id="IPR022346">
    <property type="entry name" value="T2SS_GspH"/>
</dbReference>
<dbReference type="NCBIfam" id="TIGR02532">
    <property type="entry name" value="IV_pilin_GFxxxE"/>
    <property type="match status" value="1"/>
</dbReference>
<dbReference type="Pfam" id="PF12019">
    <property type="entry name" value="GspH"/>
    <property type="match status" value="1"/>
</dbReference>
<dbReference type="Pfam" id="PF07963">
    <property type="entry name" value="N_methyl"/>
    <property type="match status" value="1"/>
</dbReference>
<dbReference type="SUPFAM" id="SSF54523">
    <property type="entry name" value="Pili subunits"/>
    <property type="match status" value="1"/>
</dbReference>
<dbReference type="PROSITE" id="PS00409">
    <property type="entry name" value="PROKAR_NTER_METHYL"/>
    <property type="match status" value="1"/>
</dbReference>
<comment type="function">
    <text evidence="4">Plays an essential role in natural DNA transformation but is not required for pilus biogenesis.</text>
</comment>
<comment type="subcellular location">
    <subcellularLocation>
        <location evidence="1">Cell inner membrane</location>
        <topology evidence="2">Single-pass membrane protein</topology>
    </subcellularLocation>
    <subcellularLocation>
        <location evidence="1">Cell outer membrane</location>
        <topology evidence="2">Single-pass membrane protein</topology>
    </subcellularLocation>
    <subcellularLocation>
        <location evidence="1">Periplasm</location>
    </subcellularLocation>
    <text evidence="1">The single N-terminal transmembrane is initially involved in the correct localization to the inner membrane. Once the leader sequence cleaved, this region plays a role in multimerization and protein-protein interactions in the periplasm and the outer membrane.</text>
</comment>
<comment type="disruption phenotype">
    <text evidence="4">Mutants have a wild-type piliation phenotype but are deficient in transformation.</text>
</comment>
<accession>Q72JC4</accession>
<reference key="1">
    <citation type="journal article" date="2004" name="Nat. Biotechnol.">
        <title>The genome sequence of the extreme thermophile Thermus thermophilus.</title>
        <authorList>
            <person name="Henne A."/>
            <person name="Brueggemann H."/>
            <person name="Raasch C."/>
            <person name="Wiezer A."/>
            <person name="Hartsch T."/>
            <person name="Liesegang H."/>
            <person name="Johann A."/>
            <person name="Lienard T."/>
            <person name="Gohl O."/>
            <person name="Martinez-Arias R."/>
            <person name="Jacobi C."/>
            <person name="Starkuviene V."/>
            <person name="Schlenczeck S."/>
            <person name="Dencker S."/>
            <person name="Huber R."/>
            <person name="Klenk H.-P."/>
            <person name="Kramer W."/>
            <person name="Merkl R."/>
            <person name="Gottschalk G."/>
            <person name="Fritz H.-J."/>
        </authorList>
    </citation>
    <scope>NUCLEOTIDE SEQUENCE [LARGE SCALE GENOMIC DNA]</scope>
    <source>
        <strain>ATCC BAA-163 / DSM 7039 / HB27</strain>
    </source>
</reference>
<reference key="2">
    <citation type="journal article" date="2003" name="Appl. Environ. Microbiol.">
        <title>Pilin-like proteins in the extremely thermophilic bacterium Thermus thermophilus HB27: implication in competence for natural transformation and links to type IV pilus biogenesis.</title>
        <authorList>
            <person name="Friedrich A."/>
            <person name="Rumszauer J."/>
            <person name="Henne A."/>
            <person name="Averhoff B."/>
        </authorList>
    </citation>
    <scope>FUNCTION</scope>
    <scope>DISRUPTION PHENOTYPE</scope>
</reference>
<organism>
    <name type="scientific">Thermus thermophilus (strain ATCC BAA-163 / DSM 7039 / HB27)</name>
    <dbReference type="NCBI Taxonomy" id="262724"/>
    <lineage>
        <taxon>Bacteria</taxon>
        <taxon>Thermotogati</taxon>
        <taxon>Deinococcota</taxon>
        <taxon>Deinococci</taxon>
        <taxon>Thermales</taxon>
        <taxon>Thermaceae</taxon>
        <taxon>Thermus</taxon>
    </lineage>
</organism>
<name>PILA1_THET2</name>
<proteinExistence type="inferred from homology"/>
<feature type="propeptide" id="PRO_0000450700" description="Leader sequence" evidence="3 6">
    <location>
        <begin position="1"/>
        <end position="5"/>
    </location>
</feature>
<feature type="chain" id="PRO_0000450701" description="Pilin-like protein PilA1" evidence="3">
    <location>
        <begin position="6"/>
        <end position="156"/>
    </location>
</feature>
<feature type="transmembrane region" description="Helical" evidence="6">
    <location>
        <begin position="6"/>
        <end position="29"/>
    </location>
</feature>
<feature type="modified residue" description="N-methylleucine" evidence="3">
    <location>
        <position position="6"/>
    </location>
</feature>